<keyword id="KW-1185">Reference proteome</keyword>
<keyword id="KW-0687">Ribonucleoprotein</keyword>
<keyword id="KW-0689">Ribosomal protein</keyword>
<sequence length="102" mass="11466">MQQARVRLAGVDPDDLDNICGEVQEIADKTGVKVSGPVPLPTKTLEVPSRKSPDGEGTATWEHWEMRVHKRLIDIDADERALRQLMRIQVPNDVNIEIVLED</sequence>
<protein>
    <recommendedName>
        <fullName evidence="1">Small ribosomal subunit protein uS10</fullName>
    </recommendedName>
    <alternativeName>
        <fullName evidence="3">30S ribosomal protein S10</fullName>
    </alternativeName>
</protein>
<reference key="1">
    <citation type="journal article" date="1995" name="Biochem. Mol. Biol. Int.">
        <title>Organization and nucleotide sequence of a gene cluster comprising the translation elongation factor 1 alpha, ribosomal protein S10 and tRNA(Ala) from Halobacterium halobium.</title>
        <authorList>
            <person name="Fujita T."/>
            <person name="Itoh T."/>
        </authorList>
    </citation>
    <scope>NUCLEOTIDE SEQUENCE [GENOMIC DNA]</scope>
    <source>
        <strain>A9</strain>
    </source>
</reference>
<reference key="2">
    <citation type="journal article" date="2000" name="Proc. Natl. Acad. Sci. U.S.A.">
        <title>Genome sequence of Halobacterium species NRC-1.</title>
        <authorList>
            <person name="Ng W.V."/>
            <person name="Kennedy S.P."/>
            <person name="Mahairas G.G."/>
            <person name="Berquist B."/>
            <person name="Pan M."/>
            <person name="Shukla H.D."/>
            <person name="Lasky S.R."/>
            <person name="Baliga N.S."/>
            <person name="Thorsson V."/>
            <person name="Sbrogna J."/>
            <person name="Swartzell S."/>
            <person name="Weir D."/>
            <person name="Hall J."/>
            <person name="Dahl T.A."/>
            <person name="Welti R."/>
            <person name="Goo Y.A."/>
            <person name="Leithauser B."/>
            <person name="Keller K."/>
            <person name="Cruz R."/>
            <person name="Danson M.J."/>
            <person name="Hough D.W."/>
            <person name="Maddocks D.G."/>
            <person name="Jablonski P.E."/>
            <person name="Krebs M.P."/>
            <person name="Angevine C.M."/>
            <person name="Dale H."/>
            <person name="Isenbarger T.A."/>
            <person name="Peck R.F."/>
            <person name="Pohlschroder M."/>
            <person name="Spudich J.L."/>
            <person name="Jung K.-H."/>
            <person name="Alam M."/>
            <person name="Freitas T."/>
            <person name="Hou S."/>
            <person name="Daniels C.J."/>
            <person name="Dennis P.P."/>
            <person name="Omer A.D."/>
            <person name="Ebhardt H."/>
            <person name="Lowe T.M."/>
            <person name="Liang P."/>
            <person name="Riley M."/>
            <person name="Hood L."/>
            <person name="DasSarma S."/>
        </authorList>
    </citation>
    <scope>NUCLEOTIDE SEQUENCE [LARGE SCALE GENOMIC DNA]</scope>
    <source>
        <strain>ATCC 700922 / JCM 11081 / NRC-1</strain>
    </source>
</reference>
<organism>
    <name type="scientific">Halobacterium salinarum (strain ATCC 700922 / JCM 11081 / NRC-1)</name>
    <name type="common">Halobacterium halobium</name>
    <dbReference type="NCBI Taxonomy" id="64091"/>
    <lineage>
        <taxon>Archaea</taxon>
        <taxon>Methanobacteriati</taxon>
        <taxon>Methanobacteriota</taxon>
        <taxon>Stenosarchaea group</taxon>
        <taxon>Halobacteria</taxon>
        <taxon>Halobacteriales</taxon>
        <taxon>Halobacteriaceae</taxon>
        <taxon>Halobacterium</taxon>
        <taxon>Halobacterium salinarum NRC-34001</taxon>
    </lineage>
</organism>
<accession>P48854</accession>
<accession>Q9HM90</accession>
<feature type="chain" id="PRO_0000146644" description="Small ribosomal subunit protein uS10">
    <location>
        <begin position="1"/>
        <end position="102"/>
    </location>
</feature>
<feature type="region of interest" description="Disordered" evidence="2">
    <location>
        <begin position="34"/>
        <end position="58"/>
    </location>
</feature>
<comment type="function">
    <text evidence="1">Involved in the binding of tRNA to the ribosomes.</text>
</comment>
<comment type="subunit">
    <text evidence="1">Part of the 30S ribosomal subunit.</text>
</comment>
<comment type="similarity">
    <text evidence="1">Belongs to the universal ribosomal protein uS10 family.</text>
</comment>
<evidence type="ECO:0000255" key="1">
    <source>
        <dbReference type="HAMAP-Rule" id="MF_00508"/>
    </source>
</evidence>
<evidence type="ECO:0000256" key="2">
    <source>
        <dbReference type="SAM" id="MobiDB-lite"/>
    </source>
</evidence>
<evidence type="ECO:0000305" key="3"/>
<name>RS10_HALSA</name>
<proteinExistence type="inferred from homology"/>
<gene>
    <name evidence="1" type="primary">rps10</name>
    <name type="ordered locus">VNG_2648G</name>
</gene>
<dbReference type="EMBL" id="D32120">
    <property type="protein sequence ID" value="BAA06846.1"/>
    <property type="molecule type" value="Genomic_DNA"/>
</dbReference>
<dbReference type="EMBL" id="AE004437">
    <property type="protein sequence ID" value="AAG20681.1"/>
    <property type="molecule type" value="Genomic_DNA"/>
</dbReference>
<dbReference type="PIR" id="E84414">
    <property type="entry name" value="E84414"/>
</dbReference>
<dbReference type="PIR" id="T09380">
    <property type="entry name" value="T09380"/>
</dbReference>
<dbReference type="SMR" id="P48854"/>
<dbReference type="FunCoup" id="P48854">
    <property type="interactions" value="132"/>
</dbReference>
<dbReference type="STRING" id="64091.VNG_2648G"/>
<dbReference type="PaxDb" id="64091-VNG_2648G"/>
<dbReference type="KEGG" id="hal:VNG_2648G"/>
<dbReference type="PATRIC" id="fig|64091.14.peg.2057"/>
<dbReference type="HOGENOM" id="CLU_122625_0_1_2"/>
<dbReference type="InParanoid" id="P48854"/>
<dbReference type="OrthoDB" id="371736at2157"/>
<dbReference type="PhylomeDB" id="P48854"/>
<dbReference type="Proteomes" id="UP000000554">
    <property type="component" value="Chromosome"/>
</dbReference>
<dbReference type="GO" id="GO:0022627">
    <property type="term" value="C:cytosolic small ribosomal subunit"/>
    <property type="evidence" value="ECO:0000318"/>
    <property type="project" value="GO_Central"/>
</dbReference>
<dbReference type="GO" id="GO:0003735">
    <property type="term" value="F:structural constituent of ribosome"/>
    <property type="evidence" value="ECO:0000318"/>
    <property type="project" value="GO_Central"/>
</dbReference>
<dbReference type="GO" id="GO:0000049">
    <property type="term" value="F:tRNA binding"/>
    <property type="evidence" value="ECO:0007669"/>
    <property type="project" value="UniProtKB-UniRule"/>
</dbReference>
<dbReference type="GO" id="GO:0006412">
    <property type="term" value="P:translation"/>
    <property type="evidence" value="ECO:0007669"/>
    <property type="project" value="UniProtKB-UniRule"/>
</dbReference>
<dbReference type="FunFam" id="3.30.70.600:FF:000004">
    <property type="entry name" value="30S ribosomal protein S10"/>
    <property type="match status" value="1"/>
</dbReference>
<dbReference type="Gene3D" id="3.30.70.600">
    <property type="entry name" value="Ribosomal protein S10 domain"/>
    <property type="match status" value="1"/>
</dbReference>
<dbReference type="HAMAP" id="MF_00508">
    <property type="entry name" value="Ribosomal_uS10"/>
    <property type="match status" value="1"/>
</dbReference>
<dbReference type="InterPro" id="IPR001848">
    <property type="entry name" value="Ribosomal_uS10"/>
</dbReference>
<dbReference type="InterPro" id="IPR018268">
    <property type="entry name" value="Ribosomal_uS10_CS"/>
</dbReference>
<dbReference type="InterPro" id="IPR027486">
    <property type="entry name" value="Ribosomal_uS10_dom"/>
</dbReference>
<dbReference type="InterPro" id="IPR036838">
    <property type="entry name" value="Ribosomal_uS10_dom_sf"/>
</dbReference>
<dbReference type="InterPro" id="IPR005729">
    <property type="entry name" value="Ribosomal_uS10_euk/arc"/>
</dbReference>
<dbReference type="NCBIfam" id="TIGR01046">
    <property type="entry name" value="uS10_euk_arch"/>
    <property type="match status" value="1"/>
</dbReference>
<dbReference type="PANTHER" id="PTHR11700">
    <property type="entry name" value="30S RIBOSOMAL PROTEIN S10 FAMILY MEMBER"/>
    <property type="match status" value="1"/>
</dbReference>
<dbReference type="Pfam" id="PF00338">
    <property type="entry name" value="Ribosomal_S10"/>
    <property type="match status" value="1"/>
</dbReference>
<dbReference type="PRINTS" id="PR00971">
    <property type="entry name" value="RIBOSOMALS10"/>
</dbReference>
<dbReference type="SMART" id="SM01403">
    <property type="entry name" value="Ribosomal_S10"/>
    <property type="match status" value="1"/>
</dbReference>
<dbReference type="SUPFAM" id="SSF54999">
    <property type="entry name" value="Ribosomal protein S10"/>
    <property type="match status" value="1"/>
</dbReference>
<dbReference type="PROSITE" id="PS00361">
    <property type="entry name" value="RIBOSOMAL_S10"/>
    <property type="match status" value="1"/>
</dbReference>